<proteinExistence type="evidence at transcript level"/>
<geneLocation type="mitochondrion"/>
<accession>P92514</accession>
<accession>A0A2P2CLH8</accession>
<accession>A7KNG3</accession>
<accession>F4IMA5</accession>
<accession>Q8S8B5</accession>
<keyword id="KW-0472">Membrane</keyword>
<keyword id="KW-0496">Mitochondrion</keyword>
<keyword id="KW-0999">Mitochondrion inner membrane</keyword>
<keyword id="KW-1185">Reference proteome</keyword>
<keyword id="KW-0691">RNA editing</keyword>
<keyword id="KW-1278">Translocase</keyword>
<keyword id="KW-0812">Transmembrane</keyword>
<keyword id="KW-1133">Transmembrane helix</keyword>
<gene>
    <name type="primary">COX3</name>
    <name evidence="8" type="ordered locus">AtMg00730</name>
</gene>
<gene>
    <name evidence="7" type="ordered locus">At2g07687</name>
</gene>
<reference key="1">
    <citation type="journal article" date="1997" name="Nat. Genet.">
        <title>The mitochondrial genome of Arabidopsis thaliana contains 57 genes in 366,924 nucleotides.</title>
        <authorList>
            <person name="Unseld M."/>
            <person name="Marienfeld J.R."/>
            <person name="Brandt P."/>
            <person name="Brennicke A."/>
        </authorList>
    </citation>
    <scope>NUCLEOTIDE SEQUENCE [LARGE SCALE GENOMIC DNA]</scope>
    <source>
        <strain>cv. C24</strain>
    </source>
</reference>
<reference key="2">
    <citation type="journal article" date="2011" name="BMC Biol.">
        <title>Double-strand break repair processes drive evolution of the mitochondrial genome in Arabidopsis.</title>
        <authorList>
            <person name="Davila J.I."/>
            <person name="Arrieta-Montiel M.P."/>
            <person name="Wamboldt Y."/>
            <person name="Cao J."/>
            <person name="Hagmann J."/>
            <person name="Shedge V."/>
            <person name="Xu Y.Z."/>
            <person name="Weigel D."/>
            <person name="Mackenzie S.A."/>
        </authorList>
    </citation>
    <scope>NUCLEOTIDE SEQUENCE [LARGE SCALE GENOMIC DNA]</scope>
    <source>
        <strain>cv. C24</strain>
        <strain>cv. Columbia</strain>
        <strain>cv. Landsberg erecta</strain>
    </source>
</reference>
<reference key="3">
    <citation type="journal article" date="2018" name="Plant Cell">
        <title>Correction of persistent errors in Arabidopsis reference mitochondrial genomes.</title>
        <authorList>
            <person name="Sloan D.B."/>
            <person name="Wu Z."/>
            <person name="Sharbrough J."/>
        </authorList>
    </citation>
    <scope>NUCLEOTIDE SEQUENCE [LARGE SCALE GENOMIC DNA]</scope>
    <scope>RNA EDITING</scope>
    <source>
        <strain>cv. Columbia</strain>
    </source>
</reference>
<reference key="4">
    <citation type="journal article" date="1999" name="Nature">
        <title>Sequence and analysis of chromosome 2 of the plant Arabidopsis thaliana.</title>
        <authorList>
            <person name="Lin X."/>
            <person name="Kaul S."/>
            <person name="Rounsley S.D."/>
            <person name="Shea T.P."/>
            <person name="Benito M.-I."/>
            <person name="Town C.D."/>
            <person name="Fujii C.Y."/>
            <person name="Mason T.M."/>
            <person name="Bowman C.L."/>
            <person name="Barnstead M.E."/>
            <person name="Feldblyum T.V."/>
            <person name="Buell C.R."/>
            <person name="Ketchum K.A."/>
            <person name="Lee J.J."/>
            <person name="Ronning C.M."/>
            <person name="Koo H.L."/>
            <person name="Moffat K.S."/>
            <person name="Cronin L.A."/>
            <person name="Shen M."/>
            <person name="Pai G."/>
            <person name="Van Aken S."/>
            <person name="Umayam L."/>
            <person name="Tallon L.J."/>
            <person name="Gill J.E."/>
            <person name="Adams M.D."/>
            <person name="Carrera A.J."/>
            <person name="Creasy T.H."/>
            <person name="Goodman H.M."/>
            <person name="Somerville C.R."/>
            <person name="Copenhaver G.P."/>
            <person name="Preuss D."/>
            <person name="Nierman W.C."/>
            <person name="White O."/>
            <person name="Eisen J.A."/>
            <person name="Salzberg S.L."/>
            <person name="Fraser C.M."/>
            <person name="Venter J.C."/>
        </authorList>
    </citation>
    <scope>NUCLEOTIDE SEQUENCE [LARGE SCALE GENOMIC DNA] (AT2G07687)</scope>
    <source>
        <strain>cv. Columbia</strain>
    </source>
</reference>
<reference key="5">
    <citation type="journal article" date="2017" name="Plant J.">
        <title>Araport11: a complete reannotation of the Arabidopsis thaliana reference genome.</title>
        <authorList>
            <person name="Cheng C.Y."/>
            <person name="Krishnakumar V."/>
            <person name="Chan A.P."/>
            <person name="Thibaud-Nissen F."/>
            <person name="Schobel S."/>
            <person name="Town C.D."/>
        </authorList>
    </citation>
    <scope>GENOME REANNOTATION (AT2G07687)</scope>
    <source>
        <strain>cv. Columbia</strain>
    </source>
</reference>
<reference key="6">
    <citation type="journal article" date="2008" name="Genetics">
        <title>Genetic architecture of mitochondrial editing in Arabidopsis thaliana.</title>
        <authorList>
            <person name="Bentolila S."/>
            <person name="Elliott L.E."/>
            <person name="Hanson M.R."/>
        </authorList>
    </citation>
    <scope>NUCLEOTIDE SEQUENCE [MRNA] OF 12-258</scope>
    <scope>RNA EDITING</scope>
    <source>
        <strain>cv. Columbia</strain>
        <strain>cv. Landsberg erecta</strain>
        <tissue>Rosette leaf</tissue>
    </source>
</reference>
<reference key="7">
    <citation type="journal article" date="1999" name="Proc. Natl. Acad. Sci. U.S.A.">
        <title>RNA editing in Arabidopsis mitochondria effects 441 C to U changes in ORFs.</title>
        <authorList>
            <person name="Giege P."/>
            <person name="Brennicke A."/>
        </authorList>
    </citation>
    <scope>RNA EDITING</scope>
</reference>
<sequence>MIESQRHSYHLVDPSPWPISGSLGALATTVGGVMYMHSFQGGARLLSLGLIFILYTMFVWWRDVLRESTLEGHHTKVVQLGLRYGFILFIVSEVMFFFAFFWAFFHSSLAPAVEIGGIWPPKGIEVLDPWEIPFLNTLILLSSGAAVTWAHHAILAGKEKRAVYALVATVLLALVFTGFQGMEYYQAPFTISDSIYGSTFFLATGFHGFHVIIGTLFLIICGIRQYLGHLTKEHHVGFEAAAWYWHFVDVVWLFLFVSIYWWGGI</sequence>
<feature type="chain" id="PRO_0000183737" description="Cytochrome c oxidase subunit 3">
    <location>
        <begin position="1"/>
        <end position="265"/>
    </location>
</feature>
<feature type="transmembrane region" description="Helical" evidence="2">
    <location>
        <begin position="41"/>
        <end position="61"/>
    </location>
</feature>
<feature type="transmembrane region" description="Helical" evidence="2">
    <location>
        <begin position="85"/>
        <end position="105"/>
    </location>
</feature>
<feature type="transmembrane region" description="Helical" evidence="2">
    <location>
        <begin position="137"/>
        <end position="157"/>
    </location>
</feature>
<feature type="transmembrane region" description="Helical" evidence="2">
    <location>
        <begin position="162"/>
        <end position="182"/>
    </location>
</feature>
<feature type="transmembrane region" description="Helical" evidence="2">
    <location>
        <begin position="200"/>
        <end position="220"/>
    </location>
</feature>
<feature type="transmembrane region" description="Helical" evidence="2">
    <location>
        <begin position="245"/>
        <end position="265"/>
    </location>
</feature>
<protein>
    <recommendedName>
        <fullName>Cytochrome c oxidase subunit 3</fullName>
        <ecNumber>7.1.1.9</ecNumber>
    </recommendedName>
    <alternativeName>
        <fullName>Cytochrome c oxidase polypeptide III</fullName>
    </alternativeName>
</protein>
<organism>
    <name type="scientific">Arabidopsis thaliana</name>
    <name type="common">Mouse-ear cress</name>
    <dbReference type="NCBI Taxonomy" id="3702"/>
    <lineage>
        <taxon>Eukaryota</taxon>
        <taxon>Viridiplantae</taxon>
        <taxon>Streptophyta</taxon>
        <taxon>Embryophyta</taxon>
        <taxon>Tracheophyta</taxon>
        <taxon>Spermatophyta</taxon>
        <taxon>Magnoliopsida</taxon>
        <taxon>eudicotyledons</taxon>
        <taxon>Gunneridae</taxon>
        <taxon>Pentapetalae</taxon>
        <taxon>rosids</taxon>
        <taxon>malvids</taxon>
        <taxon>Brassicales</taxon>
        <taxon>Brassicaceae</taxon>
        <taxon>Camelineae</taxon>
        <taxon>Arabidopsis</taxon>
    </lineage>
</organism>
<comment type="function">
    <text evidence="1">Component of the cytochrome c oxidase, the last enzyme in the mitochondrial electron transport chain which drives oxidative phosphorylation. The respiratory chain contains 3 multisubunit complexes succinate dehydrogenase (complex II, CII), ubiquinol-cytochrome c oxidoreductase (cytochrome b-c1 complex, complex III, CIII) and cytochrome c oxidase (complex IV, CIV), that cooperate to transfer electrons derived from NADH and succinate to molecular oxygen, creating an electrochemical gradient over the inner membrane that drives transmembrane transport and the ATP synthase. Cytochrome c oxidase is the component of the respiratory chain that catalyzes the reduction of oxygen to water. Electrons originating from reduced cytochrome c in the intermembrane space (IMS) are transferred via the dinuclear copper A center (CU(A)) of subunit 2 and heme A of subunit 1 to the active site in subunit 1, a binuclear center (BNC) formed by heme A3 and copper B (CU(B)). The BNC reduces molecular oxygen to 2 water molecules using 4 electrons from cytochrome c in the IMS and 4 protons from the mitochondrial matrix.</text>
</comment>
<comment type="catalytic activity">
    <reaction evidence="1">
        <text>4 Fe(II)-[cytochrome c] + O2 + 8 H(+)(in) = 4 Fe(III)-[cytochrome c] + 2 H2O + 4 H(+)(out)</text>
        <dbReference type="Rhea" id="RHEA:11436"/>
        <dbReference type="Rhea" id="RHEA-COMP:10350"/>
        <dbReference type="Rhea" id="RHEA-COMP:14399"/>
        <dbReference type="ChEBI" id="CHEBI:15377"/>
        <dbReference type="ChEBI" id="CHEBI:15378"/>
        <dbReference type="ChEBI" id="CHEBI:15379"/>
        <dbReference type="ChEBI" id="CHEBI:29033"/>
        <dbReference type="ChEBI" id="CHEBI:29034"/>
        <dbReference type="EC" id="7.1.1.9"/>
    </reaction>
    <physiologicalReaction direction="left-to-right" evidence="1">
        <dbReference type="Rhea" id="RHEA:11437"/>
    </physiologicalReaction>
</comment>
<comment type="subunit">
    <text evidence="1">Component of the cytochrome c oxidase (complex IV, CIV), a multisubunit enzyme composed of a catalytic core of 3 subunits and several supernumerary subunits. The complex exists as a monomer or a dimer and forms supercomplexes (SCs) in the inner mitochondrial membrane with ubiquinol-cytochrome c oxidoreductase (cytochrome b-c1 complex, complex III, CIII).</text>
</comment>
<comment type="subcellular location">
    <subcellularLocation>
        <location evidence="1">Mitochondrion inner membrane</location>
        <topology evidence="1">Multi-pass membrane protein</topology>
    </subcellularLocation>
</comment>
<comment type="RNA editing">
    <location>
        <position position="38" evidence="3 4 5"/>
    </location>
    <location>
        <position position="82" evidence="3 4 5"/>
    </location>
    <location>
        <position position="86" evidence="3 4 5"/>
    </location>
    <location>
        <position position="104" evidence="3 4 5"/>
    </location>
    <location>
        <position position="105" evidence="3 4 5"/>
    </location>
    <location>
        <position position="138" evidence="3 4 5"/>
    </location>
    <location>
        <position position="141" evidence="3 4 5"/>
    </location>
</comment>
<comment type="miscellaneous">
    <text>A stretch of 270 kb of the mitochondrial genome is duplicated within the centromere of chromosome 2 resulting in the duplication of the gene. The expression of this duplicated gene (At2g07687) is not demonstrated. It is also probably not RNA edited and therefore differs in all the positions known to be edited.</text>
</comment>
<comment type="similarity">
    <text evidence="6">Belongs to the cytochrome c oxidase subunit 3 family.</text>
</comment>
<dbReference type="EC" id="7.1.1.9"/>
<dbReference type="EMBL" id="Y08501">
    <property type="protein sequence ID" value="CAA69818.3"/>
    <property type="status" value="ALT_SEQ"/>
    <property type="molecule type" value="Genomic_DNA"/>
</dbReference>
<dbReference type="EMBL" id="JF729200">
    <property type="protein sequence ID" value="AEK01262.1"/>
    <property type="status" value="ALT_SEQ"/>
    <property type="molecule type" value="Genomic_DNA"/>
</dbReference>
<dbReference type="EMBL" id="JF729201">
    <property type="protein sequence ID" value="AEK01298.1"/>
    <property type="status" value="ALT_SEQ"/>
    <property type="molecule type" value="Genomic_DNA"/>
</dbReference>
<dbReference type="EMBL" id="JF729202">
    <property type="protein sequence ID" value="AEK01326.1"/>
    <property type="status" value="ALT_SEQ"/>
    <property type="molecule type" value="Genomic_DNA"/>
</dbReference>
<dbReference type="EMBL" id="BK010421">
    <property type="protein sequence ID" value="DAB41522.2"/>
    <property type="molecule type" value="Genomic_DNA"/>
</dbReference>
<dbReference type="EMBL" id="AC007143">
    <property type="protein sequence ID" value="AAM15412.1"/>
    <property type="status" value="ALT_SEQ"/>
    <property type="molecule type" value="Genomic_DNA"/>
</dbReference>
<dbReference type="EMBL" id="CP002685">
    <property type="protein sequence ID" value="AEC06078.1"/>
    <property type="status" value="ALT_SEQ"/>
    <property type="molecule type" value="Genomic_DNA"/>
</dbReference>
<dbReference type="EMBL" id="EF488906">
    <property type="protein sequence ID" value="ABS50618.1"/>
    <property type="molecule type" value="mRNA"/>
</dbReference>
<dbReference type="EMBL" id="EF488907">
    <property type="protein sequence ID" value="ABS50619.1"/>
    <property type="molecule type" value="mRNA"/>
</dbReference>
<dbReference type="RefSeq" id="NP_085532.2">
    <property type="nucleotide sequence ID" value="NC_001284.2"/>
</dbReference>
<dbReference type="RefSeq" id="NP_178782.1">
    <property type="nucleotide sequence ID" value="NM_126741.2"/>
</dbReference>
<dbReference type="SMR" id="P92514"/>
<dbReference type="FunCoup" id="P92514">
    <property type="interactions" value="141"/>
</dbReference>
<dbReference type="STRING" id="3702.A0A2P2CLH8"/>
<dbReference type="PaxDb" id="3702-AT2G07687.1"/>
<dbReference type="GeneID" id="815364"/>
<dbReference type="KEGG" id="ath:AT2G07687"/>
<dbReference type="Araport" id="AT2G07687"/>
<dbReference type="Araport" id="ATMG00730"/>
<dbReference type="TAIR" id="AT2G07687"/>
<dbReference type="TAIR" id="ATMG00730">
    <property type="gene designation" value="COX3"/>
</dbReference>
<dbReference type="eggNOG" id="KOG4664">
    <property type="taxonomic scope" value="Eukaryota"/>
</dbReference>
<dbReference type="HOGENOM" id="CLU_044071_0_0_1"/>
<dbReference type="InParanoid" id="P92514"/>
<dbReference type="PhylomeDB" id="P92514"/>
<dbReference type="BioCyc" id="ARA:AT2G07687-MONOMER"/>
<dbReference type="BioCyc" id="ARA:ATMG00730-MONOMER"/>
<dbReference type="BioCyc" id="MetaCyc:ATMG00730-MONOMER"/>
<dbReference type="PRO" id="PR:P92514"/>
<dbReference type="Proteomes" id="UP000006548">
    <property type="component" value="Chromosome 2"/>
</dbReference>
<dbReference type="Proteomes" id="UP000006548">
    <property type="component" value="Mitochondrion MT"/>
</dbReference>
<dbReference type="ExpressionAtlas" id="P92514">
    <property type="expression patterns" value="baseline and differential"/>
</dbReference>
<dbReference type="GO" id="GO:0005743">
    <property type="term" value="C:mitochondrial inner membrane"/>
    <property type="evidence" value="ECO:0007669"/>
    <property type="project" value="UniProtKB-SubCell"/>
</dbReference>
<dbReference type="GO" id="GO:0005739">
    <property type="term" value="C:mitochondrion"/>
    <property type="evidence" value="ECO:0000318"/>
    <property type="project" value="GO_Central"/>
</dbReference>
<dbReference type="GO" id="GO:0004129">
    <property type="term" value="F:cytochrome-c oxidase activity"/>
    <property type="evidence" value="ECO:0007669"/>
    <property type="project" value="UniProtKB-EC"/>
</dbReference>
<dbReference type="GO" id="GO:0006123">
    <property type="term" value="P:mitochondrial electron transport, cytochrome c to oxygen"/>
    <property type="evidence" value="ECO:0000318"/>
    <property type="project" value="GO_Central"/>
</dbReference>
<dbReference type="CDD" id="cd01665">
    <property type="entry name" value="Cyt_c_Oxidase_III"/>
    <property type="match status" value="1"/>
</dbReference>
<dbReference type="FunFam" id="1.10.287.70:FF:000075">
    <property type="entry name" value="Cytochrome c oxidase subunit 3"/>
    <property type="match status" value="1"/>
</dbReference>
<dbReference type="FunFam" id="1.20.120.80:FF:000002">
    <property type="entry name" value="Cytochrome c oxidase subunit 3"/>
    <property type="match status" value="1"/>
</dbReference>
<dbReference type="Gene3D" id="1.10.287.70">
    <property type="match status" value="1"/>
</dbReference>
<dbReference type="Gene3D" id="1.20.120.80">
    <property type="entry name" value="Cytochrome c oxidase, subunit III, four-helix bundle"/>
    <property type="match status" value="1"/>
</dbReference>
<dbReference type="InterPro" id="IPR024791">
    <property type="entry name" value="Cyt_c/ubiquinol_Oxase_su3"/>
</dbReference>
<dbReference type="InterPro" id="IPR033945">
    <property type="entry name" value="Cyt_c_oxase_su3_dom"/>
</dbReference>
<dbReference type="InterPro" id="IPR000298">
    <property type="entry name" value="Cyt_c_oxidase-like_su3"/>
</dbReference>
<dbReference type="InterPro" id="IPR035973">
    <property type="entry name" value="Cyt_c_oxidase_su3-like_sf"/>
</dbReference>
<dbReference type="InterPro" id="IPR013833">
    <property type="entry name" value="Cyt_c_oxidase_su3_a-hlx"/>
</dbReference>
<dbReference type="PANTHER" id="PTHR11403:SF7">
    <property type="entry name" value="CYTOCHROME C OXIDASE SUBUNIT 3"/>
    <property type="match status" value="1"/>
</dbReference>
<dbReference type="PANTHER" id="PTHR11403">
    <property type="entry name" value="CYTOCHROME C OXIDASE SUBUNIT III"/>
    <property type="match status" value="1"/>
</dbReference>
<dbReference type="Pfam" id="PF00510">
    <property type="entry name" value="COX3"/>
    <property type="match status" value="1"/>
</dbReference>
<dbReference type="SUPFAM" id="SSF81452">
    <property type="entry name" value="Cytochrome c oxidase subunit III-like"/>
    <property type="match status" value="1"/>
</dbReference>
<dbReference type="PROSITE" id="PS50253">
    <property type="entry name" value="COX3"/>
    <property type="match status" value="1"/>
</dbReference>
<name>COX3_ARATH</name>
<evidence type="ECO:0000250" key="1">
    <source>
        <dbReference type="UniProtKB" id="P00420"/>
    </source>
</evidence>
<evidence type="ECO:0000255" key="2"/>
<evidence type="ECO:0000269" key="3">
    <source>
    </source>
</evidence>
<evidence type="ECO:0000269" key="4">
    <source>
    </source>
</evidence>
<evidence type="ECO:0000269" key="5">
    <source>
    </source>
</evidence>
<evidence type="ECO:0000305" key="6"/>
<evidence type="ECO:0000312" key="7">
    <source>
        <dbReference type="Araport" id="AT2G07687"/>
    </source>
</evidence>
<evidence type="ECO:0000312" key="8">
    <source>
        <dbReference type="Araport" id="ATMG00730"/>
    </source>
</evidence>